<proteinExistence type="inferred from homology"/>
<organism>
    <name type="scientific">Haemophilus influenzae (strain ATCC 51907 / DSM 11121 / KW20 / Rd)</name>
    <dbReference type="NCBI Taxonomy" id="71421"/>
    <lineage>
        <taxon>Bacteria</taxon>
        <taxon>Pseudomonadati</taxon>
        <taxon>Pseudomonadota</taxon>
        <taxon>Gammaproteobacteria</taxon>
        <taxon>Pasteurellales</taxon>
        <taxon>Pasteurellaceae</taxon>
        <taxon>Haemophilus</taxon>
    </lineage>
</organism>
<evidence type="ECO:0000255" key="1">
    <source>
        <dbReference type="PROSITE-ProRule" id="PRU00434"/>
    </source>
</evidence>
<evidence type="ECO:0000305" key="2"/>
<sequence length="257" mass="28895">MSMLKVSNIQKNFNGNHVLKGIDFEINKGEVVAILGPSGSGKTTFLRCLNLLERPEQGILEFTDGSLKIDFSQKISKADELKLRRRSSMVFQQYNLFPHRSALENVMEGMVVVQKQDKAQAREKALSLLEKVGLKNKADLFPSQLSGGQQQRVGIARALAVKPDIILLDEPTSALDPELVGEVLQTLKMLAQEGWTMIIVTHEMQFAKDVADRVILMADGHIVEQNTADKFFTCPQHERTKQFLLQAKIPLELDYYI</sequence>
<keyword id="KW-0029">Amino-acid transport</keyword>
<keyword id="KW-0067">ATP-binding</keyword>
<keyword id="KW-0997">Cell inner membrane</keyword>
<keyword id="KW-1003">Cell membrane</keyword>
<keyword id="KW-0472">Membrane</keyword>
<keyword id="KW-0547">Nucleotide-binding</keyword>
<keyword id="KW-1185">Reference proteome</keyword>
<keyword id="KW-0813">Transport</keyword>
<feature type="chain" id="PRO_0000093204" description="Probable amino-acid ABC transporter ATP-binding protein HI_1078">
    <location>
        <begin position="1"/>
        <end position="257"/>
    </location>
</feature>
<feature type="domain" description="ABC transporter" evidence="1">
    <location>
        <begin position="4"/>
        <end position="244"/>
    </location>
</feature>
<feature type="binding site" evidence="1">
    <location>
        <begin position="36"/>
        <end position="43"/>
    </location>
    <ligand>
        <name>ATP</name>
        <dbReference type="ChEBI" id="CHEBI:30616"/>
    </ligand>
</feature>
<reference key="1">
    <citation type="journal article" date="1995" name="Science">
        <title>Whole-genome random sequencing and assembly of Haemophilus influenzae Rd.</title>
        <authorList>
            <person name="Fleischmann R.D."/>
            <person name="Adams M.D."/>
            <person name="White O."/>
            <person name="Clayton R.A."/>
            <person name="Kirkness E.F."/>
            <person name="Kerlavage A.R."/>
            <person name="Bult C.J."/>
            <person name="Tomb J.-F."/>
            <person name="Dougherty B.A."/>
            <person name="Merrick J.M."/>
            <person name="McKenney K."/>
            <person name="Sutton G.G."/>
            <person name="FitzHugh W."/>
            <person name="Fields C.A."/>
            <person name="Gocayne J.D."/>
            <person name="Scott J.D."/>
            <person name="Shirley R."/>
            <person name="Liu L.-I."/>
            <person name="Glodek A."/>
            <person name="Kelley J.M."/>
            <person name="Weidman J.F."/>
            <person name="Phillips C.A."/>
            <person name="Spriggs T."/>
            <person name="Hedblom E."/>
            <person name="Cotton M.D."/>
            <person name="Utterback T.R."/>
            <person name="Hanna M.C."/>
            <person name="Nguyen D.T."/>
            <person name="Saudek D.M."/>
            <person name="Brandon R.C."/>
            <person name="Fine L.D."/>
            <person name="Fritchman J.L."/>
            <person name="Fuhrmann J.L."/>
            <person name="Geoghagen N.S.M."/>
            <person name="Gnehm C.L."/>
            <person name="McDonald L.A."/>
            <person name="Small K.V."/>
            <person name="Fraser C.M."/>
            <person name="Smith H.O."/>
            <person name="Venter J.C."/>
        </authorList>
    </citation>
    <scope>NUCLEOTIDE SEQUENCE [LARGE SCALE GENOMIC DNA]</scope>
    <source>
        <strain>ATCC 51907 / DSM 11121 / KW20 / Rd</strain>
    </source>
</reference>
<protein>
    <recommendedName>
        <fullName>Probable amino-acid ABC transporter ATP-binding protein HI_1078</fullName>
    </recommendedName>
</protein>
<accession>P45022</accession>
<comment type="function">
    <text>Probably part of a binding-protein-dependent transport system for an amino acid. Probably responsible for energy coupling to the transport system.</text>
</comment>
<comment type="subcellular location">
    <subcellularLocation>
        <location evidence="2">Cell inner membrane</location>
        <topology evidence="2">Peripheral membrane protein</topology>
    </subcellularLocation>
</comment>
<comment type="similarity">
    <text evidence="2">Belongs to the ABC transporter superfamily.</text>
</comment>
<name>Y1078_HAEIN</name>
<dbReference type="EMBL" id="L42023">
    <property type="protein sequence ID" value="AAC22734.1"/>
    <property type="molecule type" value="Genomic_DNA"/>
</dbReference>
<dbReference type="PIR" id="G64181">
    <property type="entry name" value="G64181"/>
</dbReference>
<dbReference type="RefSeq" id="NP_439235.2">
    <property type="nucleotide sequence ID" value="NC_000907.1"/>
</dbReference>
<dbReference type="SMR" id="P45022"/>
<dbReference type="STRING" id="71421.HI_1078"/>
<dbReference type="EnsemblBacteria" id="AAC22734">
    <property type="protein sequence ID" value="AAC22734"/>
    <property type="gene ID" value="HI_1078"/>
</dbReference>
<dbReference type="KEGG" id="hin:HI_1078"/>
<dbReference type="PATRIC" id="fig|71421.8.peg.1123"/>
<dbReference type="eggNOG" id="COG1126">
    <property type="taxonomic scope" value="Bacteria"/>
</dbReference>
<dbReference type="HOGENOM" id="CLU_000604_1_22_6"/>
<dbReference type="OrthoDB" id="9802264at2"/>
<dbReference type="PhylomeDB" id="P45022"/>
<dbReference type="Proteomes" id="UP000000579">
    <property type="component" value="Chromosome"/>
</dbReference>
<dbReference type="GO" id="GO:0005886">
    <property type="term" value="C:plasma membrane"/>
    <property type="evidence" value="ECO:0007669"/>
    <property type="project" value="UniProtKB-SubCell"/>
</dbReference>
<dbReference type="GO" id="GO:0015424">
    <property type="term" value="F:ABC-type amino acid transporter activity"/>
    <property type="evidence" value="ECO:0007669"/>
    <property type="project" value="InterPro"/>
</dbReference>
<dbReference type="GO" id="GO:0005524">
    <property type="term" value="F:ATP binding"/>
    <property type="evidence" value="ECO:0007669"/>
    <property type="project" value="UniProtKB-KW"/>
</dbReference>
<dbReference type="GO" id="GO:0016887">
    <property type="term" value="F:ATP hydrolysis activity"/>
    <property type="evidence" value="ECO:0007669"/>
    <property type="project" value="InterPro"/>
</dbReference>
<dbReference type="CDD" id="cd03262">
    <property type="entry name" value="ABC_HisP_GlnQ"/>
    <property type="match status" value="1"/>
</dbReference>
<dbReference type="FunFam" id="3.40.50.300:FF:000020">
    <property type="entry name" value="Amino acid ABC transporter ATP-binding component"/>
    <property type="match status" value="1"/>
</dbReference>
<dbReference type="Gene3D" id="3.40.50.300">
    <property type="entry name" value="P-loop containing nucleotide triphosphate hydrolases"/>
    <property type="match status" value="1"/>
</dbReference>
<dbReference type="InterPro" id="IPR003593">
    <property type="entry name" value="AAA+_ATPase"/>
</dbReference>
<dbReference type="InterPro" id="IPR030679">
    <property type="entry name" value="ABC_ATPase_HisP-typ"/>
</dbReference>
<dbReference type="InterPro" id="IPR003439">
    <property type="entry name" value="ABC_transporter-like_ATP-bd"/>
</dbReference>
<dbReference type="InterPro" id="IPR017871">
    <property type="entry name" value="ABC_transporter-like_CS"/>
</dbReference>
<dbReference type="InterPro" id="IPR050086">
    <property type="entry name" value="MetN_ABC_transporter-like"/>
</dbReference>
<dbReference type="InterPro" id="IPR027417">
    <property type="entry name" value="P-loop_NTPase"/>
</dbReference>
<dbReference type="PANTHER" id="PTHR43166">
    <property type="entry name" value="AMINO ACID IMPORT ATP-BINDING PROTEIN"/>
    <property type="match status" value="1"/>
</dbReference>
<dbReference type="PANTHER" id="PTHR43166:SF15">
    <property type="entry name" value="HISTIDINE TRANSPORT ATP-BINDING PROTEIN HISP"/>
    <property type="match status" value="1"/>
</dbReference>
<dbReference type="Pfam" id="PF00005">
    <property type="entry name" value="ABC_tran"/>
    <property type="match status" value="1"/>
</dbReference>
<dbReference type="PIRSF" id="PIRSF039085">
    <property type="entry name" value="ABC_ATPase_HisP"/>
    <property type="match status" value="1"/>
</dbReference>
<dbReference type="SMART" id="SM00382">
    <property type="entry name" value="AAA"/>
    <property type="match status" value="1"/>
</dbReference>
<dbReference type="SUPFAM" id="SSF52540">
    <property type="entry name" value="P-loop containing nucleoside triphosphate hydrolases"/>
    <property type="match status" value="1"/>
</dbReference>
<dbReference type="PROSITE" id="PS00211">
    <property type="entry name" value="ABC_TRANSPORTER_1"/>
    <property type="match status" value="1"/>
</dbReference>
<dbReference type="PROSITE" id="PS50893">
    <property type="entry name" value="ABC_TRANSPORTER_2"/>
    <property type="match status" value="1"/>
</dbReference>
<gene>
    <name type="ordered locus">HI_1078</name>
</gene>